<reference key="1">
    <citation type="journal article" date="2003" name="Nature">
        <title>Unique physiological and pathogenic features of Leptospira interrogans revealed by whole-genome sequencing.</title>
        <authorList>
            <person name="Ren S.-X."/>
            <person name="Fu G."/>
            <person name="Jiang X.-G."/>
            <person name="Zeng R."/>
            <person name="Miao Y.-G."/>
            <person name="Xu H."/>
            <person name="Zhang Y.-X."/>
            <person name="Xiong H."/>
            <person name="Lu G."/>
            <person name="Lu L.-F."/>
            <person name="Jiang H.-Q."/>
            <person name="Jia J."/>
            <person name="Tu Y.-F."/>
            <person name="Jiang J.-X."/>
            <person name="Gu W.-Y."/>
            <person name="Zhang Y.-Q."/>
            <person name="Cai Z."/>
            <person name="Sheng H.-H."/>
            <person name="Yin H.-F."/>
            <person name="Zhang Y."/>
            <person name="Zhu G.-F."/>
            <person name="Wan M."/>
            <person name="Huang H.-L."/>
            <person name="Qian Z."/>
            <person name="Wang S.-Y."/>
            <person name="Ma W."/>
            <person name="Yao Z.-J."/>
            <person name="Shen Y."/>
            <person name="Qiang B.-Q."/>
            <person name="Xia Q.-C."/>
            <person name="Guo X.-K."/>
            <person name="Danchin A."/>
            <person name="Saint Girons I."/>
            <person name="Somerville R.L."/>
            <person name="Wen Y.-M."/>
            <person name="Shi M.-H."/>
            <person name="Chen Z."/>
            <person name="Xu J.-G."/>
            <person name="Zhao G.-P."/>
        </authorList>
    </citation>
    <scope>NUCLEOTIDE SEQUENCE [LARGE SCALE GENOMIC DNA]</scope>
    <source>
        <strain>56601</strain>
    </source>
</reference>
<accession>Q8EYR3</accession>
<comment type="catalytic activity">
    <reaction evidence="1">
        <text>tRNA(Phe) + L-phenylalanine + ATP = L-phenylalanyl-tRNA(Phe) + AMP + diphosphate + H(+)</text>
        <dbReference type="Rhea" id="RHEA:19413"/>
        <dbReference type="Rhea" id="RHEA-COMP:9668"/>
        <dbReference type="Rhea" id="RHEA-COMP:9699"/>
        <dbReference type="ChEBI" id="CHEBI:15378"/>
        <dbReference type="ChEBI" id="CHEBI:30616"/>
        <dbReference type="ChEBI" id="CHEBI:33019"/>
        <dbReference type="ChEBI" id="CHEBI:58095"/>
        <dbReference type="ChEBI" id="CHEBI:78442"/>
        <dbReference type="ChEBI" id="CHEBI:78531"/>
        <dbReference type="ChEBI" id="CHEBI:456215"/>
        <dbReference type="EC" id="6.1.1.20"/>
    </reaction>
</comment>
<comment type="cofactor">
    <cofactor evidence="1">
        <name>Mg(2+)</name>
        <dbReference type="ChEBI" id="CHEBI:18420"/>
    </cofactor>
    <text evidence="1">Binds 2 magnesium ions per tetramer.</text>
</comment>
<comment type="subunit">
    <text evidence="1">Tetramer of two alpha and two beta subunits.</text>
</comment>
<comment type="subcellular location">
    <subcellularLocation>
        <location evidence="1">Cytoplasm</location>
    </subcellularLocation>
</comment>
<comment type="similarity">
    <text evidence="1">Belongs to the class-II aminoacyl-tRNA synthetase family. Phe-tRNA synthetase alpha subunit type 1 subfamily.</text>
</comment>
<protein>
    <recommendedName>
        <fullName evidence="1">Phenylalanine--tRNA ligase alpha subunit</fullName>
        <ecNumber evidence="1">6.1.1.20</ecNumber>
    </recommendedName>
    <alternativeName>
        <fullName evidence="1">Phenylalanyl-tRNA synthetase alpha subunit</fullName>
        <shortName evidence="1">PheRS</shortName>
    </alternativeName>
</protein>
<name>SYFA_LEPIN</name>
<organism>
    <name type="scientific">Leptospira interrogans serogroup Icterohaemorrhagiae serovar Lai (strain 56601)</name>
    <dbReference type="NCBI Taxonomy" id="189518"/>
    <lineage>
        <taxon>Bacteria</taxon>
        <taxon>Pseudomonadati</taxon>
        <taxon>Spirochaetota</taxon>
        <taxon>Spirochaetia</taxon>
        <taxon>Leptospirales</taxon>
        <taxon>Leptospiraceae</taxon>
        <taxon>Leptospira</taxon>
    </lineage>
</organism>
<keyword id="KW-0030">Aminoacyl-tRNA synthetase</keyword>
<keyword id="KW-0067">ATP-binding</keyword>
<keyword id="KW-0963">Cytoplasm</keyword>
<keyword id="KW-0436">Ligase</keyword>
<keyword id="KW-0460">Magnesium</keyword>
<keyword id="KW-0479">Metal-binding</keyword>
<keyword id="KW-0547">Nucleotide-binding</keyword>
<keyword id="KW-0648">Protein biosynthesis</keyword>
<keyword id="KW-1185">Reference proteome</keyword>
<proteinExistence type="inferred from homology"/>
<evidence type="ECO:0000255" key="1">
    <source>
        <dbReference type="HAMAP-Rule" id="MF_00281"/>
    </source>
</evidence>
<dbReference type="EC" id="6.1.1.20" evidence="1"/>
<dbReference type="EMBL" id="AE010300">
    <property type="protein sequence ID" value="AAN51348.1"/>
    <property type="molecule type" value="Genomic_DNA"/>
</dbReference>
<dbReference type="RefSeq" id="NP_714330.1">
    <property type="nucleotide sequence ID" value="NC_004342.2"/>
</dbReference>
<dbReference type="RefSeq" id="WP_001053743.1">
    <property type="nucleotide sequence ID" value="NC_004342.2"/>
</dbReference>
<dbReference type="SMR" id="Q8EYR3"/>
<dbReference type="FunCoup" id="Q8EYR3">
    <property type="interactions" value="477"/>
</dbReference>
<dbReference type="STRING" id="189518.LA_4150"/>
<dbReference type="PaxDb" id="189518-LA_4150"/>
<dbReference type="EnsemblBacteria" id="AAN51348">
    <property type="protein sequence ID" value="AAN51348"/>
    <property type="gene ID" value="LA_4150"/>
</dbReference>
<dbReference type="GeneID" id="61143177"/>
<dbReference type="KEGG" id="lil:LA_4150"/>
<dbReference type="PATRIC" id="fig|189518.3.peg.4119"/>
<dbReference type="HOGENOM" id="CLU_025086_0_1_12"/>
<dbReference type="InParanoid" id="Q8EYR3"/>
<dbReference type="OrthoDB" id="9800719at2"/>
<dbReference type="Proteomes" id="UP000001408">
    <property type="component" value="Chromosome I"/>
</dbReference>
<dbReference type="GO" id="GO:0005737">
    <property type="term" value="C:cytoplasm"/>
    <property type="evidence" value="ECO:0000318"/>
    <property type="project" value="GO_Central"/>
</dbReference>
<dbReference type="GO" id="GO:0005524">
    <property type="term" value="F:ATP binding"/>
    <property type="evidence" value="ECO:0007669"/>
    <property type="project" value="UniProtKB-UniRule"/>
</dbReference>
<dbReference type="GO" id="GO:0000287">
    <property type="term" value="F:magnesium ion binding"/>
    <property type="evidence" value="ECO:0007669"/>
    <property type="project" value="UniProtKB-UniRule"/>
</dbReference>
<dbReference type="GO" id="GO:0004826">
    <property type="term" value="F:phenylalanine-tRNA ligase activity"/>
    <property type="evidence" value="ECO:0000318"/>
    <property type="project" value="GO_Central"/>
</dbReference>
<dbReference type="GO" id="GO:0000049">
    <property type="term" value="F:tRNA binding"/>
    <property type="evidence" value="ECO:0007669"/>
    <property type="project" value="InterPro"/>
</dbReference>
<dbReference type="GO" id="GO:0006432">
    <property type="term" value="P:phenylalanyl-tRNA aminoacylation"/>
    <property type="evidence" value="ECO:0000318"/>
    <property type="project" value="GO_Central"/>
</dbReference>
<dbReference type="CDD" id="cd00496">
    <property type="entry name" value="PheRS_alpha_core"/>
    <property type="match status" value="1"/>
</dbReference>
<dbReference type="FunFam" id="3.30.930.10:FF:000089">
    <property type="entry name" value="Phenylalanine--tRNA ligase alpha subunit"/>
    <property type="match status" value="1"/>
</dbReference>
<dbReference type="Gene3D" id="3.30.930.10">
    <property type="entry name" value="Bira Bifunctional Protein, Domain 2"/>
    <property type="match status" value="1"/>
</dbReference>
<dbReference type="HAMAP" id="MF_00281">
    <property type="entry name" value="Phe_tRNA_synth_alpha1"/>
    <property type="match status" value="1"/>
</dbReference>
<dbReference type="InterPro" id="IPR006195">
    <property type="entry name" value="aa-tRNA-synth_II"/>
</dbReference>
<dbReference type="InterPro" id="IPR045864">
    <property type="entry name" value="aa-tRNA-synth_II/BPL/LPL"/>
</dbReference>
<dbReference type="InterPro" id="IPR004529">
    <property type="entry name" value="Phe-tRNA-synth_IIc_asu"/>
</dbReference>
<dbReference type="InterPro" id="IPR004188">
    <property type="entry name" value="Phe-tRNA_ligase_II_N"/>
</dbReference>
<dbReference type="InterPro" id="IPR022911">
    <property type="entry name" value="Phe_tRNA_ligase_alpha1_bac"/>
</dbReference>
<dbReference type="InterPro" id="IPR002319">
    <property type="entry name" value="Phenylalanyl-tRNA_Synthase"/>
</dbReference>
<dbReference type="InterPro" id="IPR010978">
    <property type="entry name" value="tRNA-bd_arm"/>
</dbReference>
<dbReference type="NCBIfam" id="TIGR00468">
    <property type="entry name" value="pheS"/>
    <property type="match status" value="1"/>
</dbReference>
<dbReference type="PANTHER" id="PTHR11538:SF41">
    <property type="entry name" value="PHENYLALANINE--TRNA LIGASE, MITOCHONDRIAL"/>
    <property type="match status" value="1"/>
</dbReference>
<dbReference type="PANTHER" id="PTHR11538">
    <property type="entry name" value="PHENYLALANYL-TRNA SYNTHETASE"/>
    <property type="match status" value="1"/>
</dbReference>
<dbReference type="Pfam" id="PF02912">
    <property type="entry name" value="Phe_tRNA-synt_N"/>
    <property type="match status" value="1"/>
</dbReference>
<dbReference type="Pfam" id="PF01409">
    <property type="entry name" value="tRNA-synt_2d"/>
    <property type="match status" value="1"/>
</dbReference>
<dbReference type="SUPFAM" id="SSF55681">
    <property type="entry name" value="Class II aaRS and biotin synthetases"/>
    <property type="match status" value="1"/>
</dbReference>
<dbReference type="SUPFAM" id="SSF46589">
    <property type="entry name" value="tRNA-binding arm"/>
    <property type="match status" value="1"/>
</dbReference>
<dbReference type="PROSITE" id="PS50862">
    <property type="entry name" value="AA_TRNA_LIGASE_II"/>
    <property type="match status" value="1"/>
</dbReference>
<sequence>MNLSEELDSIYKEAIQKIGSSISEEDLDKNKNDFIGKKGKLTAVLKNVASLSIEEKKTVGQKANELSKKLETFISETKTSLKKKLFEKQAASEFFDVLRPLSKPSNGSLHPITQIQYEIEDIFASMGFSVMDGPEIETDTNNFGALNFTEDHPAREMQDTFYLENGNLLRTHTSAIQVRTLRKLKPPFRIIAPGRVFRYEEVDASHEHTFYQIEGMVVGKDISAANLIDTMQVLLSRIFEKEIKTRLRPGYFPFVEPGFELDISCLVCDGKGCPVCKQSGWLELLPCGLIHPNVLSHAGLDPKEWTGFAFGLGLDRLVMMRYGIHDIRYFQSGNLRFLKQF</sequence>
<feature type="chain" id="PRO_0000126722" description="Phenylalanine--tRNA ligase alpha subunit">
    <location>
        <begin position="1"/>
        <end position="341"/>
    </location>
</feature>
<feature type="binding site" evidence="1">
    <location>
        <position position="256"/>
    </location>
    <ligand>
        <name>Mg(2+)</name>
        <dbReference type="ChEBI" id="CHEBI:18420"/>
        <note>shared with beta subunit</note>
    </ligand>
</feature>
<gene>
    <name evidence="1" type="primary">pheS</name>
    <name type="ordered locus">LA_4150</name>
</gene>